<organism>
    <name type="scientific">Methanococcus aeolicus (strain ATCC BAA-1280 / DSM 17508 / OCM 812 / Nankai-3)</name>
    <dbReference type="NCBI Taxonomy" id="419665"/>
    <lineage>
        <taxon>Archaea</taxon>
        <taxon>Methanobacteriati</taxon>
        <taxon>Methanobacteriota</taxon>
        <taxon>Methanomada group</taxon>
        <taxon>Methanococci</taxon>
        <taxon>Methanococcales</taxon>
        <taxon>Methanococcaceae</taxon>
        <taxon>Methanococcus</taxon>
    </lineage>
</organism>
<gene>
    <name evidence="1" type="primary">hisS</name>
    <name type="ordered locus">Maeo_0030</name>
</gene>
<name>SYH_META3</name>
<dbReference type="EC" id="6.1.1.21" evidence="1"/>
<dbReference type="EMBL" id="CP000743">
    <property type="protein sequence ID" value="ABR55623.1"/>
    <property type="molecule type" value="Genomic_DNA"/>
</dbReference>
<dbReference type="RefSeq" id="WP_011972755.1">
    <property type="nucleotide sequence ID" value="NC_009635.1"/>
</dbReference>
<dbReference type="SMR" id="A6UT01"/>
<dbReference type="STRING" id="419665.Maeo_0030"/>
<dbReference type="GeneID" id="5327007"/>
<dbReference type="KEGG" id="mae:Maeo_0030"/>
<dbReference type="eggNOG" id="arCOG00404">
    <property type="taxonomic scope" value="Archaea"/>
</dbReference>
<dbReference type="HOGENOM" id="CLU_025113_3_1_2"/>
<dbReference type="OrthoDB" id="8659at2157"/>
<dbReference type="Proteomes" id="UP000001106">
    <property type="component" value="Chromosome"/>
</dbReference>
<dbReference type="GO" id="GO:0005737">
    <property type="term" value="C:cytoplasm"/>
    <property type="evidence" value="ECO:0007669"/>
    <property type="project" value="UniProtKB-SubCell"/>
</dbReference>
<dbReference type="GO" id="GO:0005524">
    <property type="term" value="F:ATP binding"/>
    <property type="evidence" value="ECO:0007669"/>
    <property type="project" value="UniProtKB-UniRule"/>
</dbReference>
<dbReference type="GO" id="GO:0004821">
    <property type="term" value="F:histidine-tRNA ligase activity"/>
    <property type="evidence" value="ECO:0007669"/>
    <property type="project" value="UniProtKB-UniRule"/>
</dbReference>
<dbReference type="GO" id="GO:0006427">
    <property type="term" value="P:histidyl-tRNA aminoacylation"/>
    <property type="evidence" value="ECO:0007669"/>
    <property type="project" value="UniProtKB-UniRule"/>
</dbReference>
<dbReference type="GO" id="GO:0000105">
    <property type="term" value="P:L-histidine biosynthetic process"/>
    <property type="evidence" value="ECO:0007669"/>
    <property type="project" value="InterPro"/>
</dbReference>
<dbReference type="CDD" id="cd00773">
    <property type="entry name" value="HisRS-like_core"/>
    <property type="match status" value="1"/>
</dbReference>
<dbReference type="Gene3D" id="3.40.50.800">
    <property type="entry name" value="Anticodon-binding domain"/>
    <property type="match status" value="1"/>
</dbReference>
<dbReference type="Gene3D" id="3.30.930.10">
    <property type="entry name" value="Bira Bifunctional Protein, Domain 2"/>
    <property type="match status" value="1"/>
</dbReference>
<dbReference type="HAMAP" id="MF_00127">
    <property type="entry name" value="His_tRNA_synth"/>
    <property type="match status" value="1"/>
</dbReference>
<dbReference type="HAMAP" id="MF_00125">
    <property type="entry name" value="HisZ"/>
    <property type="match status" value="1"/>
</dbReference>
<dbReference type="InterPro" id="IPR006195">
    <property type="entry name" value="aa-tRNA-synth_II"/>
</dbReference>
<dbReference type="InterPro" id="IPR045864">
    <property type="entry name" value="aa-tRNA-synth_II/BPL/LPL"/>
</dbReference>
<dbReference type="InterPro" id="IPR004154">
    <property type="entry name" value="Anticodon-bd"/>
</dbReference>
<dbReference type="InterPro" id="IPR036621">
    <property type="entry name" value="Anticodon-bd_dom_sf"/>
</dbReference>
<dbReference type="InterPro" id="IPR015807">
    <property type="entry name" value="His-tRNA-ligase"/>
</dbReference>
<dbReference type="InterPro" id="IPR041715">
    <property type="entry name" value="HisRS-like_core"/>
</dbReference>
<dbReference type="InterPro" id="IPR004516">
    <property type="entry name" value="HisRS/HisZ"/>
</dbReference>
<dbReference type="InterPro" id="IPR004517">
    <property type="entry name" value="HisZ"/>
</dbReference>
<dbReference type="NCBIfam" id="TIGR00442">
    <property type="entry name" value="hisS"/>
    <property type="match status" value="1"/>
</dbReference>
<dbReference type="NCBIfam" id="TIGR00443">
    <property type="entry name" value="hisZ_biosyn_reg"/>
    <property type="match status" value="1"/>
</dbReference>
<dbReference type="PANTHER" id="PTHR43707:SF1">
    <property type="entry name" value="HISTIDINE--TRNA LIGASE, MITOCHONDRIAL-RELATED"/>
    <property type="match status" value="1"/>
</dbReference>
<dbReference type="PANTHER" id="PTHR43707">
    <property type="entry name" value="HISTIDYL-TRNA SYNTHETASE"/>
    <property type="match status" value="1"/>
</dbReference>
<dbReference type="Pfam" id="PF03129">
    <property type="entry name" value="HGTP_anticodon"/>
    <property type="match status" value="1"/>
</dbReference>
<dbReference type="Pfam" id="PF13393">
    <property type="entry name" value="tRNA-synt_His"/>
    <property type="match status" value="1"/>
</dbReference>
<dbReference type="PIRSF" id="PIRSF001549">
    <property type="entry name" value="His-tRNA_synth"/>
    <property type="match status" value="1"/>
</dbReference>
<dbReference type="SUPFAM" id="SSF52954">
    <property type="entry name" value="Class II aaRS ABD-related"/>
    <property type="match status" value="1"/>
</dbReference>
<dbReference type="SUPFAM" id="SSF55681">
    <property type="entry name" value="Class II aaRS and biotin synthetases"/>
    <property type="match status" value="1"/>
</dbReference>
<dbReference type="PROSITE" id="PS50862">
    <property type="entry name" value="AA_TRNA_LIGASE_II"/>
    <property type="match status" value="1"/>
</dbReference>
<evidence type="ECO:0000255" key="1">
    <source>
        <dbReference type="HAMAP-Rule" id="MF_00127"/>
    </source>
</evidence>
<proteinExistence type="inferred from homology"/>
<sequence length="418" mass="48544">MFNRPKGTRDFAPSEMKKRKIIENKLKSVFMAYNFNEINTPTFEYFELLSKKTGEDIRKQLFVFKDHGNREMGLRPEITSSVVRFYINELKNLPKPQKLFYFANCFRYEQPQAGRYREFWQMGCELLGSKNPIADAEVINLAMDGLNKINMDYEIHIGHLGVLKGVFEEFGLTEDEELKIRRLIDKEDYENLEKCLIELEENKNIIIKDIIFSVLNSKGTVEEVIGNLKEILKNYPKSIEALNNLEEIMEFVKRNNYIINLGIARGLDYYTGMVFEVYGKKEGARQVCGGGRYDNLIELFEGAPTPAVGFAYGFDRIMLNIDDFEVEDKRILIVPIKKDKKLLKECLIIADKLREMEKIVEVDLMNRKLNKALNYANTVGISKVIMIGEKELNERKISIKDMETGEQKLIDLEELSNI</sequence>
<protein>
    <recommendedName>
        <fullName evidence="1">Histidine--tRNA ligase</fullName>
        <ecNumber evidence="1">6.1.1.21</ecNumber>
    </recommendedName>
    <alternativeName>
        <fullName evidence="1">Histidyl-tRNA synthetase</fullName>
        <shortName evidence="1">HisRS</shortName>
    </alternativeName>
</protein>
<accession>A6UT01</accession>
<reference key="1">
    <citation type="submission" date="2007-06" db="EMBL/GenBank/DDBJ databases">
        <title>Complete sequence of Methanococcus aeolicus Nankai-3.</title>
        <authorList>
            <consortium name="US DOE Joint Genome Institute"/>
            <person name="Copeland A."/>
            <person name="Lucas S."/>
            <person name="Lapidus A."/>
            <person name="Barry K."/>
            <person name="Glavina del Rio T."/>
            <person name="Dalin E."/>
            <person name="Tice H."/>
            <person name="Pitluck S."/>
            <person name="Chain P."/>
            <person name="Malfatti S."/>
            <person name="Shin M."/>
            <person name="Vergez L."/>
            <person name="Schmutz J."/>
            <person name="Larimer F."/>
            <person name="Land M."/>
            <person name="Hauser L."/>
            <person name="Kyrpides N."/>
            <person name="Lykidis A."/>
            <person name="Sieprawska-Lupa M."/>
            <person name="Whitman W.B."/>
            <person name="Richardson P."/>
        </authorList>
    </citation>
    <scope>NUCLEOTIDE SEQUENCE [LARGE SCALE GENOMIC DNA]</scope>
    <source>
        <strain>ATCC BAA-1280 / DSM 17508 / OCM 812 / Nankai-3</strain>
    </source>
</reference>
<keyword id="KW-0030">Aminoacyl-tRNA synthetase</keyword>
<keyword id="KW-0067">ATP-binding</keyword>
<keyword id="KW-0963">Cytoplasm</keyword>
<keyword id="KW-0436">Ligase</keyword>
<keyword id="KW-0547">Nucleotide-binding</keyword>
<keyword id="KW-0648">Protein biosynthesis</keyword>
<feature type="chain" id="PRO_1000016386" description="Histidine--tRNA ligase">
    <location>
        <begin position="1"/>
        <end position="418"/>
    </location>
</feature>
<comment type="catalytic activity">
    <reaction evidence="1">
        <text>tRNA(His) + L-histidine + ATP = L-histidyl-tRNA(His) + AMP + diphosphate + H(+)</text>
        <dbReference type="Rhea" id="RHEA:17313"/>
        <dbReference type="Rhea" id="RHEA-COMP:9665"/>
        <dbReference type="Rhea" id="RHEA-COMP:9689"/>
        <dbReference type="ChEBI" id="CHEBI:15378"/>
        <dbReference type="ChEBI" id="CHEBI:30616"/>
        <dbReference type="ChEBI" id="CHEBI:33019"/>
        <dbReference type="ChEBI" id="CHEBI:57595"/>
        <dbReference type="ChEBI" id="CHEBI:78442"/>
        <dbReference type="ChEBI" id="CHEBI:78527"/>
        <dbReference type="ChEBI" id="CHEBI:456215"/>
        <dbReference type="EC" id="6.1.1.21"/>
    </reaction>
</comment>
<comment type="subcellular location">
    <subcellularLocation>
        <location evidence="1">Cytoplasm</location>
    </subcellularLocation>
</comment>
<comment type="similarity">
    <text evidence="1">Belongs to the class-II aminoacyl-tRNA synthetase family.</text>
</comment>